<reference key="1">
    <citation type="journal article" date="1997" name="Nature">
        <title>The nucleotide sequence of Saccharomyces cerevisiae chromosome IV.</title>
        <authorList>
            <person name="Jacq C."/>
            <person name="Alt-Moerbe J."/>
            <person name="Andre B."/>
            <person name="Arnold W."/>
            <person name="Bahr A."/>
            <person name="Ballesta J.P.G."/>
            <person name="Bargues M."/>
            <person name="Baron L."/>
            <person name="Becker A."/>
            <person name="Biteau N."/>
            <person name="Bloecker H."/>
            <person name="Blugeon C."/>
            <person name="Boskovic J."/>
            <person name="Brandt P."/>
            <person name="Brueckner M."/>
            <person name="Buitrago M.J."/>
            <person name="Coster F."/>
            <person name="Delaveau T."/>
            <person name="del Rey F."/>
            <person name="Dujon B."/>
            <person name="Eide L.G."/>
            <person name="Garcia-Cantalejo J.M."/>
            <person name="Goffeau A."/>
            <person name="Gomez-Peris A."/>
            <person name="Granotier C."/>
            <person name="Hanemann V."/>
            <person name="Hankeln T."/>
            <person name="Hoheisel J.D."/>
            <person name="Jaeger W."/>
            <person name="Jimenez A."/>
            <person name="Jonniaux J.-L."/>
            <person name="Kraemer C."/>
            <person name="Kuester H."/>
            <person name="Laamanen P."/>
            <person name="Legros Y."/>
            <person name="Louis E.J."/>
            <person name="Moeller-Rieker S."/>
            <person name="Monnet A."/>
            <person name="Moro M."/>
            <person name="Mueller-Auer S."/>
            <person name="Nussbaumer B."/>
            <person name="Paricio N."/>
            <person name="Paulin L."/>
            <person name="Perea J."/>
            <person name="Perez-Alonso M."/>
            <person name="Perez-Ortin J.E."/>
            <person name="Pohl T.M."/>
            <person name="Prydz H."/>
            <person name="Purnelle B."/>
            <person name="Rasmussen S.W."/>
            <person name="Remacha M.A."/>
            <person name="Revuelta J.L."/>
            <person name="Rieger M."/>
            <person name="Salom D."/>
            <person name="Saluz H.P."/>
            <person name="Saiz J.E."/>
            <person name="Saren A.-M."/>
            <person name="Schaefer M."/>
            <person name="Scharfe M."/>
            <person name="Schmidt E.R."/>
            <person name="Schneider C."/>
            <person name="Scholler P."/>
            <person name="Schwarz S."/>
            <person name="Soler-Mira A."/>
            <person name="Urrestarazu L.A."/>
            <person name="Verhasselt P."/>
            <person name="Vissers S."/>
            <person name="Voet M."/>
            <person name="Volckaert G."/>
            <person name="Wagner G."/>
            <person name="Wambutt R."/>
            <person name="Wedler E."/>
            <person name="Wedler H."/>
            <person name="Woelfl S."/>
            <person name="Harris D.E."/>
            <person name="Bowman S."/>
            <person name="Brown D."/>
            <person name="Churcher C.M."/>
            <person name="Connor R."/>
            <person name="Dedman K."/>
            <person name="Gentles S."/>
            <person name="Hamlin N."/>
            <person name="Hunt S."/>
            <person name="Jones L."/>
            <person name="McDonald S."/>
            <person name="Murphy L.D."/>
            <person name="Niblett D."/>
            <person name="Odell C."/>
            <person name="Oliver K."/>
            <person name="Rajandream M.A."/>
            <person name="Richards C."/>
            <person name="Shore L."/>
            <person name="Walsh S.V."/>
            <person name="Barrell B.G."/>
            <person name="Dietrich F.S."/>
            <person name="Mulligan J.T."/>
            <person name="Allen E."/>
            <person name="Araujo R."/>
            <person name="Aviles E."/>
            <person name="Berno A."/>
            <person name="Carpenter J."/>
            <person name="Chen E."/>
            <person name="Cherry J.M."/>
            <person name="Chung E."/>
            <person name="Duncan M."/>
            <person name="Hunicke-Smith S."/>
            <person name="Hyman R.W."/>
            <person name="Komp C."/>
            <person name="Lashkari D."/>
            <person name="Lew H."/>
            <person name="Lin D."/>
            <person name="Mosedale D."/>
            <person name="Nakahara K."/>
            <person name="Namath A."/>
            <person name="Oefner P."/>
            <person name="Oh C."/>
            <person name="Petel F.X."/>
            <person name="Roberts D."/>
            <person name="Schramm S."/>
            <person name="Schroeder M."/>
            <person name="Shogren T."/>
            <person name="Shroff N."/>
            <person name="Winant A."/>
            <person name="Yelton M.A."/>
            <person name="Botstein D."/>
            <person name="Davis R.W."/>
            <person name="Johnston M."/>
            <person name="Andrews S."/>
            <person name="Brinkman R."/>
            <person name="Cooper J."/>
            <person name="Ding H."/>
            <person name="Du Z."/>
            <person name="Favello A."/>
            <person name="Fulton L."/>
            <person name="Gattung S."/>
            <person name="Greco T."/>
            <person name="Hallsworth K."/>
            <person name="Hawkins J."/>
            <person name="Hillier L.W."/>
            <person name="Jier M."/>
            <person name="Johnson D."/>
            <person name="Johnston L."/>
            <person name="Kirsten J."/>
            <person name="Kucaba T."/>
            <person name="Langston Y."/>
            <person name="Latreille P."/>
            <person name="Le T."/>
            <person name="Mardis E."/>
            <person name="Menezes S."/>
            <person name="Miller N."/>
            <person name="Nhan M."/>
            <person name="Pauley A."/>
            <person name="Peluso D."/>
            <person name="Rifkin L."/>
            <person name="Riles L."/>
            <person name="Taich A."/>
            <person name="Trevaskis E."/>
            <person name="Vignati D."/>
            <person name="Wilcox L."/>
            <person name="Wohldman P."/>
            <person name="Vaudin M."/>
            <person name="Wilson R."/>
            <person name="Waterston R."/>
            <person name="Albermann K."/>
            <person name="Hani J."/>
            <person name="Heumann K."/>
            <person name="Kleine K."/>
            <person name="Mewes H.-W."/>
            <person name="Zollner A."/>
            <person name="Zaccaria P."/>
        </authorList>
    </citation>
    <scope>NUCLEOTIDE SEQUENCE [LARGE SCALE GENOMIC DNA]</scope>
    <source>
        <strain>ATCC 204508 / S288c</strain>
    </source>
</reference>
<reference key="2">
    <citation type="journal article" date="2014" name="G3 (Bethesda)">
        <title>The reference genome sequence of Saccharomyces cerevisiae: Then and now.</title>
        <authorList>
            <person name="Engel S.R."/>
            <person name="Dietrich F.S."/>
            <person name="Fisk D.G."/>
            <person name="Binkley G."/>
            <person name="Balakrishnan R."/>
            <person name="Costanzo M.C."/>
            <person name="Dwight S.S."/>
            <person name="Hitz B.C."/>
            <person name="Karra K."/>
            <person name="Nash R.S."/>
            <person name="Weng S."/>
            <person name="Wong E.D."/>
            <person name="Lloyd P."/>
            <person name="Skrzypek M.S."/>
            <person name="Miyasato S.R."/>
            <person name="Simison M."/>
            <person name="Cherry J.M."/>
        </authorList>
    </citation>
    <scope>GENOME REANNOTATION</scope>
    <source>
        <strain>ATCC 204508 / S288c</strain>
    </source>
</reference>
<reference key="3">
    <citation type="journal article" date="2007" name="PLoS Genet.">
        <title>Genome-wide analysis of Rad52 foci reveals diverse mechanisms impacting recombination.</title>
        <authorList>
            <person name="Alvaro D."/>
            <person name="Lisby M."/>
            <person name="Rothstein R."/>
        </authorList>
    </citation>
    <scope>DISRUPTION PHENOTYPE</scope>
</reference>
<dbReference type="EMBL" id="KJ412216">
    <property type="protein sequence ID" value="AHX39259.1"/>
    <property type="molecule type" value="Genomic_DNA"/>
</dbReference>
<dbReference type="PIR" id="S69752">
    <property type="entry name" value="S69752"/>
</dbReference>
<dbReference type="SMR" id="A0A023PXB5"/>
<dbReference type="PaxDb" id="4932-YDR112W"/>
<dbReference type="EnsemblFungi" id="YDR112W_mRNA">
    <property type="protein sequence ID" value="YDR112W"/>
    <property type="gene ID" value="YDR112W"/>
</dbReference>
<dbReference type="AGR" id="SGD:S000002519"/>
<dbReference type="SGD" id="S000002519">
    <property type="gene designation" value="IRC2"/>
</dbReference>
<dbReference type="HOGENOM" id="CLU_2279645_0_0_1"/>
<dbReference type="GO" id="GO:0016020">
    <property type="term" value="C:membrane"/>
    <property type="evidence" value="ECO:0007669"/>
    <property type="project" value="UniProtKB-SubCell"/>
</dbReference>
<keyword id="KW-0472">Membrane</keyword>
<keyword id="KW-0812">Transmembrane</keyword>
<keyword id="KW-1133">Transmembrane helix</keyword>
<gene>
    <name evidence="3" type="primary">IRC2</name>
    <name evidence="6" type="ordered locus">YDR112W</name>
</gene>
<organism>
    <name type="scientific">Saccharomyces cerevisiae (strain ATCC 204508 / S288c)</name>
    <name type="common">Baker's yeast</name>
    <dbReference type="NCBI Taxonomy" id="559292"/>
    <lineage>
        <taxon>Eukaryota</taxon>
        <taxon>Fungi</taxon>
        <taxon>Dikarya</taxon>
        <taxon>Ascomycota</taxon>
        <taxon>Saccharomycotina</taxon>
        <taxon>Saccharomycetes</taxon>
        <taxon>Saccharomycetales</taxon>
        <taxon>Saccharomycetaceae</taxon>
        <taxon>Saccharomyces</taxon>
    </lineage>
</organism>
<proteinExistence type="uncertain"/>
<feature type="chain" id="PRO_0000430978" description="Putative uncharacterized membrane protein IRC2">
    <location>
        <begin position="1"/>
        <end position="102"/>
    </location>
</feature>
<feature type="transmembrane region" description="Helical; Name=1" evidence="1">
    <location>
        <begin position="21"/>
        <end position="43"/>
    </location>
</feature>
<feature type="transmembrane region" description="Helical; Name=2" evidence="1">
    <location>
        <begin position="58"/>
        <end position="80"/>
    </location>
</feature>
<sequence>MFALIISSKGKTSGFFFNSSFSSSALVGIAPLTAYSALVTPVFKSFLVILPAGLKSKSFAVNTPFKSCWCVIVMCSYFFCVYHLQKQHYCGAPSLYSYLLCL</sequence>
<protein>
    <recommendedName>
        <fullName evidence="4">Putative uncharacterized membrane protein IRC2</fullName>
    </recommendedName>
    <alternativeName>
        <fullName evidence="3">Increased recombination centers protein 2</fullName>
    </alternativeName>
</protein>
<comment type="subcellular location">
    <subcellularLocation>
        <location evidence="1">Membrane</location>
        <topology evidence="1">Multi-pass membrane protein</topology>
    </subcellularLocation>
</comment>
<comment type="disruption phenotype">
    <text evidence="2">Displays increased levels of spontaneous RAD52 foci in proliferating diploid cells.</text>
</comment>
<comment type="miscellaneous">
    <text evidence="4">Partially overlaps ALT2. Disruption phenotypes caused by deletion of this gene may also be a result of a defect in its overlapping gene.</text>
</comment>
<comment type="caution">
    <text evidence="5">Product of a dubious gene prediction unlikely to encode a functional protein. Because of that it is not part of the S.cerevisiae S288c complete/reference proteome set.</text>
</comment>
<accession>A0A023PXB5</accession>
<name>IRC2_YEAST</name>
<evidence type="ECO:0000255" key="1"/>
<evidence type="ECO:0000269" key="2">
    <source>
    </source>
</evidence>
<evidence type="ECO:0000303" key="3">
    <source>
    </source>
</evidence>
<evidence type="ECO:0000305" key="4"/>
<evidence type="ECO:0000305" key="5">
    <source>
    </source>
</evidence>
<evidence type="ECO:0000312" key="6">
    <source>
        <dbReference type="SGD" id="S000002519"/>
    </source>
</evidence>